<organism>
    <name type="scientific">Bos taurus</name>
    <name type="common">Bovine</name>
    <dbReference type="NCBI Taxonomy" id="9913"/>
    <lineage>
        <taxon>Eukaryota</taxon>
        <taxon>Metazoa</taxon>
        <taxon>Chordata</taxon>
        <taxon>Craniata</taxon>
        <taxon>Vertebrata</taxon>
        <taxon>Euteleostomi</taxon>
        <taxon>Mammalia</taxon>
        <taxon>Eutheria</taxon>
        <taxon>Laurasiatheria</taxon>
        <taxon>Artiodactyla</taxon>
        <taxon>Ruminantia</taxon>
        <taxon>Pecora</taxon>
        <taxon>Bovidae</taxon>
        <taxon>Bovinae</taxon>
        <taxon>Bos</taxon>
    </lineage>
</organism>
<name>HSF1_BOVIN</name>
<proteinExistence type="evidence at transcript level"/>
<comment type="function">
    <text evidence="1">Functions as a stress-inducible and DNA-binding transcription factor that plays a central role in the transcriptional activation of the heat shock response (HSR), leading to the expression of a large class of molecular chaperones, heat shock proteins (HSPs), that protect cells from cellular insult damage. In unstressed cells, is present in a HSP90-containing multichaperone complex that maintains it in a non-DNA-binding inactivated monomeric form. Upon exposure to heat and other stress stimuli, undergoes homotrimerization and activates HSP gene transcription through binding to site-specific heat shock elements (HSEs) present in the promoter regions of HSP genes. Upon heat shock stress, forms a chromatin-associated complex with TTC5/STRAP and p300/EP300 to stimulate HSR transcription, therefore increasing cell survival. Activation is reversible, and during the attenuation and recovery phase period of the HSR, returns to its unactivated form. Binds to inverted 5'-NGAAN-3' pentamer DNA sequences. Binds to chromatin at heat shock gene promoters. Activates transcription of transcription factor FOXR1 which in turn activates transcription of the heat shock chaperones HSPA1A and HSPA6 and the antioxidant NADPH-dependent reductase DHRS2. Also serves several other functions independently of its transcriptional activity. Involved in the repression of Ras-induced transcriptional activation of the c-fos gene in heat-stressed cells. Positively regulates pre-mRNA 3'-end processing and polyadenylation of HSP70 mRNA upon heat-stressed cells in a symplekin (SYMPK)-dependent manner. Plays a role in nuclear export of stress-induced HSP70 mRNA. Plays a role in the regulation of mitotic progression. Also plays a role as a negative regulator of non-homologous end joining (NHEJ) repair activity in a DNA damage-dependent manner. Involved in stress-induced cancer cell proliferation in a IER5-dependent manner.</text>
</comment>
<comment type="subunit">
    <text evidence="1">Monomer; cytoplasmic latent and transcriptionally inactive monomeric form in unstressed cells. Homotrimer; in response to stress, such as heat shock, homotrimerizes and translocates into the nucleus, binds to heat shock element (HSE) sequences in promoter of heat shock protein (HSP) genes and acquires transcriptional ability. Interacts (via monomeric form) with FKBP4; this interaction occurs in unstressed cells. Associates (via monomeric form) with HSP90 proteins in a multichaperone complex in unnstressed cell; this association maintains HSF1 in a non-DNA-binding and transcriptional inactive form by preventing HSF1 homotrimerization. Homotrimeric transactivation activity is modulated by protein-protein interactions and post-translational modifications. Interacts with HSP90AA1; this interaction is decreased in a IER5-dependent manner, promoting HSF1 accumulation in the nucleus, homotrimerization and DNA-binding activities. Part (via regulatory domain in the homotrimeric form) of a large heat shock-induced HSP90-dependent multichaperone complex at least composed of FKBP4, FKBP5, HSP90 proteins, PPID, PPP5C and PTGES3; this association maintains the HSF1 homotrimeric DNA-bound form in a transcriptionally inactive form. Interacts with BAG3 (via BAG domain); this interaction occurs in normal and heat-shocked cells promoting nuclear shuttling of HSF1 in a BAG3-dependent manner. Interacts (via homotrimeric and hyperphosphorylated form) with FKBP4; this interaction occurs upon heat shock in a HSP90-dependent multichaperone complex. Interacts (via homotrimeric form preferentially) with EEF1A proteins. In heat shocked cells, stress-denatured proteins compete with HSF1 homotrimeric DNA-bound form for association of the HSP90-dependent multichaperone complex, and hence alleviating repression of HSF1-mediated transcriptional activity. Interacts (via homotrimeric form preferentially) with DAXX; this interaction relieves homotrimeric HSF1 from repression of its transcriptional activity by HSP90-dependent multichaperone complex upon heat shock. Interacts (via D domain and preferentially with hyperphosphorylated form) with JNK1; this interaction occurs under both normal growth conditions and immediately upon heat shock. Interacts (via D domain and preferentially with hyperphosphorylated form) with MAPK3; this interaction occurs upon heat shock. Interacts with IER5 (via central region); this interaction promotes PPP2CA-induced dephosphorylation on Ser-121, Ser-307, Ser-314 and Thr-324 and HSF1 transactivation activity. Found in a ribonucleoprotein complex composed of the HSF1 homotrimeric form, translation elongation factor eEF1A proteins and non-coding RNA heat shock RNA-1 (HSR1); this complex occurs upon heat shock and stimulates HSF1 DNA-binding activity. Interacts (via transactivation domain) with HSPA1A/HSP70 and DNAJB1; these interactions result in the inhibition of heat shock- and HSF1-induced transcriptional activity during the attenuation and recovery phase from heat shock. Interacts (via Ser-303 and Ser-307 phosphorylated form) with YWHAE; this interaction promotes HSF1 sequestration in the cytoplasm in an ERK-dependent manner. Found in a complex with IER5 and PPP2CA. Interacts with TPR; this interaction increases upon heat shock and stimulates export of HSP70 mRNA. Interacts with SYMPK (via N-terminus) and CSTF2; these interactions occur upon heat shock. Interacts (via transactivation domain) with HSPA8. Interacts with EEF1D; this interaction occurs at heat shock promoter element (HSE) sequences. Interacts with MAPKAPK2. Interacts with PRKACA/PKA. Interacts (via transactivation domain) with GTF2A2. Interacts (via transactivation domain) with GTF2B. Interacts (via transactivation domain) with TBP. Interacts with CDK9, CCNT1 and EP300. Interacts (via N-terminus) with XRCC5 (via N-terminus) and XRCC6 (via N-terminus); these interactions are direct and prevent XRCC5/XRCC6 heterodimeric binding and non-homologous end joining (NHEJ) repair activities induced by ionizing radiation (IR). Interacts with PLK1; this interaction occurs during the early mitotic period, increases upon heat shock but does not modulate neither HSF1 homotrimerization and DNA-binding activities. Interacts with CDC20; this interaction occurs in mitosis in a MAD2L1-dependent manner and prevents PLK1-stimulated degradation of HSF1 by blocking the recruitment of the SCF(BTRC) ubiquitin ligase complex. Interacts with MAD2L1; this interaction occurs in mitosis. Interacts with BTRC; this interaction occurs during mitosis, induces its ubiquitin-dependent degradation following stimulus-dependent phosphorylation, a process inhibited by CDC20. Interacts with HSP90AA1 and HSP90AB1. Forms a complex with TTC5/STRAP and p300/EP300; these interactions augment chromatin-bound HSF1 and p300/EP300 histone acetyltransferase activity (By similarity).</text>
</comment>
<comment type="subcellular location">
    <subcellularLocation>
        <location evidence="1">Nucleus</location>
    </subcellularLocation>
    <subcellularLocation>
        <location evidence="1">Cytoplasm</location>
    </subcellularLocation>
    <subcellularLocation>
        <location evidence="1">Nucleus</location>
        <location evidence="1">Nucleoplasm</location>
    </subcellularLocation>
    <subcellularLocation>
        <location evidence="1">Cytoplasm</location>
        <location evidence="1">Perinuclear region</location>
    </subcellularLocation>
    <subcellularLocation>
        <location evidence="1">Cytoplasm</location>
        <location evidence="1">Cytoskeleton</location>
        <location evidence="1">Spindle pole</location>
    </subcellularLocation>
    <subcellularLocation>
        <location evidence="1">Cytoplasm</location>
        <location evidence="1">Cytoskeleton</location>
        <location evidence="1">Microtubule organizing center</location>
        <location evidence="1">Centrosome</location>
    </subcellularLocation>
    <subcellularLocation>
        <location evidence="1">Chromosome</location>
        <location evidence="1">Centromere</location>
        <location evidence="1">Kinetochore</location>
    </subcellularLocation>
    <text evidence="1">The monomeric form is cytoplasmic in unstressed cells. Predominantly nuclear protein in both unstressed and heat shocked cells. Translocates in the nucleus upon heat shock. Nucleocytoplasmic shuttling protein. Colocalizes with IER5 in the nucleus. Colocalizes with BAG3 to the nucleus upon heat stress. Localizes in subnuclear granules called nuclear stress bodies (nSBs) upon heat shock. Colocalizes with SYMPK and SUMO1 in nSBs upon heat shock. Colocalizes with PRKACA/PKA in the nucleus and nSBs upon heat shock. Relocalizes from the nucleus to the cytoplasm during the attenuation and recovery phase period of the heat shock response. Translocates in the cytoplasm in a YWHAE- and XPO1/CRM1-dependent manner. Together with histone H2AX, redistributed in discrete nuclear DNA damage-induced foci after ionizing radiation (IR). Colocalizes with calcium-responsive transactivator SS18L1 at kinetochore region on the mitotic chromosomes. Colocalizes with gamma tubulin at centrosome. Localizes at spindle pole in metaphase. Colocalizes with PLK1 at spindle poles during prometaphase.</text>
</comment>
<comment type="domain">
    <text evidence="1">In unstressed cells, spontaneous homotrimerization is inhibited. Intramolecular interactions between the hydrophobic repeat HR-A/B and HR-C regions are necessary to maintain HSF1 in the inactive, monomeric conformation. Furthermore, intramolecular interactions between the regulatory domain and the nonadjacent transactivation domain prevents transcriptional activation, a process that is relieved upon heat shock. The regulatory domain is necessary for full repression of the transcriptional activation domain in unstressed cells through its phosphorylation on Ser-303 and Ser-307. In heat stressed cells, HSF1 homotrimerization occurs through formation of a three-stranded coiled-coil structure generated by intermolecular interactions between HR-A/B regions allowing DNA-binding activity. The D domain is necessary for translocation to the nucleus, interaction with JNK1 and MAPK3 and efficient JNK1- and MAPK3-dependent phosphorylation. The regulatory domain confers heat shock inducibility on the transcriptional transactivation domain. The regulatory domain is necessary for transcriptional activation through its phosphorylation on Ser-230 upon heat shock. 9aaTAD is a transactivation motif present in a large number of yeast and animal transcription factors.</text>
</comment>
<comment type="PTM">
    <text evidence="1">Phosphorylated. Phosphorylated in unstressed cells; this phosphorylation is constitutive and implicated in the repression of HSF1 transcriptional activity. Phosphorylated on Ser-121 by MAPKAPK2; this phosphorylation promotes interaction with HSP90 proteins and inhibits HSF1 homotrimerization, DNA-binding and transactivation activities. Phosphorylation on Ser-303 by GSK3B/GSK3-beta and on Ser-307 by MAPK3 within the regulatory domain is involved in the repression of HSF1 transcriptional activity and occurs in a RAF1-dependent manner. Phosphorylation on Ser-303 and Ser-307 increases HSF1 nuclear export in a YWHAE- and XPO1/CRM1-dependent manner. Phosphorylation on Ser-307 is a prerequisite for phosphorylation on Ser-303. According to, Ser-303 is not phosphorylated in unstressed cells. Phosphorylated on Ser-415 by PLK1; phosphorylation promotes nuclear translocation upon heat shock. Hyperphosphorylated upon heat shock and during the attenuation and recovery phase period of the heat shock response. Phosphorylated on Thr-142; this phosphorylation increases HSF1 transactivation activity upon heat shock. Phosphorylation on Ser-230 by CAMK2A; this phosphorylation enhances HSF1 transactivation activity upon heat shock. Phosphorylation on Ser-327 by MAPK12; this phosphorylation enhances HSF1 nuclear translocation, homotrimerization and transactivation activities upon heat shock. Phosphorylated on Ser-320 by PRKACA/PKA; this phosphorylation promotes nuclear localization and transcriptional activity upon heat shock. Phosphorylated on Ser-359 by MAPK8; this phosphorylation occurs upon heat shock, induces HSF1 translocation into nuclear stress bodies and negatively regulates transactivation activity. Neither basal nor stress-inducible phosphorylation on Ser-230, Ser-292, Ser-303, Ser-307, Ser-314, Ser-319, Ser-320, Thr-324, Ser-327, Ser-339, Ser-346, Ser-359 and Ser-364 within the regulatory domain is involved in the regulation of HSF1 subcellular localization or DNA-binding activity; however, it negatively regulates HSF1 transactivation activity. Phosphorylated by PLK1 in the early mitotic period; this phosphorylation regulates HSF1 localization to the spindle pole, the recruitment of the SCF(BTRC) ubiquitin ligase complex inducing HSF1 degradation, and hence mitotic progression. Dephosphorylated on Ser-121, Ser-307, Ser-314, Thr-324 by phosphatase PPP2CA in an IER5-dependent manner, leading to HSF1-mediated transactivation activity.</text>
</comment>
<comment type="PTM">
    <text evidence="1">Sumoylated with SUMO1 and SUMO2 upon heat shock in a ERK2-dependent manner. Sumoylated by SUMO1 on Lys-298; sumoylation occurs upon heat shock and promotes its localization to nuclear stress bodies and DNA-binding activity. Phosphorylation on Ser-303 and Ser-307 is probably a prerequisite for sumoylation.</text>
</comment>
<comment type="PTM">
    <text evidence="1">Acetylated on Lys-118; this acetylation is decreased in a IER5-dependent manner. Acetylated on Lys-118, Lys-208 and Lys-298; these acetylations occur in a EP300-dependent manner. Acetylated on Lys-80; this acetylation inhibits DNA-binding activity upon heat shock. Deacetylated on Lys-80 by SIRT1; this deacetylation increases DNA-binding activity.</text>
</comment>
<comment type="PTM">
    <text evidence="1">Ubiquitinated by SCF(BTRC) and degraded following stimulus-dependent phosphorylation by PLK1 in mitosis. Polyubiquitinated. Undergoes proteasomal degradation upon heat shock and during the attenuation and recovery phase period of the heat shock response.</text>
</comment>
<comment type="similarity">
    <text evidence="3">Belongs to the HSF family.</text>
</comment>
<protein>
    <recommendedName>
        <fullName evidence="1">Heat shock factor protein 1</fullName>
        <shortName>HSF 1</shortName>
    </recommendedName>
    <alternativeName>
        <fullName evidence="1">Heat shock transcription factor 1</fullName>
        <shortName>HSTF 1</shortName>
    </alternativeName>
</protein>
<accession>Q08DJ8</accession>
<sequence>MDLPVGPGAAGPSNVPAFLTKLWTLVSDPDTDALICWSPSGNSFHVLDQGQFAKEVLPKYFKHSNMASFVRQLNMYGFRKVVHIEQGGLVKPERDDTEFQHPCFLRGQEQLLENIKRKVTSVSTLRSEDIKIRQDSVTKLLTDVQLMKGKQESMDSKLLAMKHENEALWREVASLRQKHAQQQKVVNKLIQFLISLVQSNRILGVKRKIPLMLNDGGPAHPMPKYGRQYSLEHIHGPGPYPAPSPAYSGSSLYSPDAVTSSGPIISDITELAPGSPVASSGGSVDERPLSSSPLVRVKEEPPSPPQSPRAEGASPGRPSSMVETPLSPTTLIDSILRESEPTPVASTTPLVDTGGRPPSPLPASAPEKCLSVACLDKTELSDHLDAMDSNLDNLQTMLTSHGFSVDTSTLLDLFSPSVTVPDMSLPDLDSSLASIQELLSPQEPPRPLEAEKSSPDSGKQLVHYTAQPLLLLDPGSVDVGSSDLPVLFELGEGSYFSEGDDYSDDPTISLLTGSEPPKAKDPTVS</sequence>
<gene>
    <name evidence="1" type="primary">HSF1</name>
</gene>
<feature type="chain" id="PRO_0000260263" description="Heat shock factor protein 1">
    <location>
        <begin position="1"/>
        <end position="525"/>
    </location>
</feature>
<feature type="region of interest" description="DNA-binding domain" evidence="1">
    <location>
        <begin position="15"/>
        <end position="120"/>
    </location>
</feature>
<feature type="region of interest" description="Hydrophobic repeat HR-A/B" evidence="1">
    <location>
        <begin position="130"/>
        <end position="203"/>
    </location>
</feature>
<feature type="region of interest" description="D domain" evidence="1">
    <location>
        <begin position="203"/>
        <end position="224"/>
    </location>
</feature>
<feature type="region of interest" description="Regulatory domain" evidence="1">
    <location>
        <begin position="221"/>
        <end position="310"/>
    </location>
</feature>
<feature type="region of interest" description="Disordered" evidence="2">
    <location>
        <begin position="266"/>
        <end position="365"/>
    </location>
</feature>
<feature type="region of interest" description="Transactivation domain" evidence="1">
    <location>
        <begin position="367"/>
        <end position="525"/>
    </location>
</feature>
<feature type="region of interest" description="Hydrophobic repeat HR-C" evidence="1">
    <location>
        <begin position="380"/>
        <end position="405"/>
    </location>
</feature>
<feature type="region of interest" description="Disordered" evidence="2">
    <location>
        <begin position="495"/>
        <end position="525"/>
    </location>
</feature>
<feature type="short sequence motif" description="9aaTAD" evidence="1">
    <location>
        <begin position="408"/>
        <end position="416"/>
    </location>
</feature>
<feature type="compositionally biased region" description="Low complexity" evidence="2">
    <location>
        <begin position="272"/>
        <end position="283"/>
    </location>
</feature>
<feature type="modified residue" description="N-acetylmethionine" evidence="1">
    <location>
        <position position="1"/>
    </location>
</feature>
<feature type="modified residue" description="N6-acetyllysine" evidence="1">
    <location>
        <position position="80"/>
    </location>
</feature>
<feature type="modified residue" description="N6-acetyllysine; alternate" evidence="1">
    <location>
        <position position="91"/>
    </location>
</feature>
<feature type="modified residue" description="N6-acetyllysine" evidence="1">
    <location>
        <position position="118"/>
    </location>
</feature>
<feature type="modified residue" description="Phosphoserine; by MAPKAPK2" evidence="1">
    <location>
        <position position="121"/>
    </location>
</feature>
<feature type="modified residue" description="Phosphothreonine; by CK2" evidence="1">
    <location>
        <position position="142"/>
    </location>
</feature>
<feature type="modified residue" description="N6-acetyllysine" evidence="1">
    <location>
        <position position="150"/>
    </location>
</feature>
<feature type="modified residue" description="N6-acetyllysine" evidence="1">
    <location>
        <position position="188"/>
    </location>
</feature>
<feature type="modified residue" description="N6-acetyllysine; alternate" evidence="1">
    <location>
        <position position="208"/>
    </location>
</feature>
<feature type="modified residue" description="Phosphoserine; by CAMK2A" evidence="1">
    <location>
        <position position="230"/>
    </location>
</feature>
<feature type="modified residue" description="Phosphoserine" evidence="1">
    <location>
        <position position="275"/>
    </location>
</feature>
<feature type="modified residue" description="Phosphoserine" evidence="1">
    <location>
        <position position="292"/>
    </location>
</feature>
<feature type="modified residue" description="N6-acetyllysine; alternate" evidence="1">
    <location>
        <position position="298"/>
    </location>
</feature>
<feature type="modified residue" description="Phosphoserine; by GSK3-beta" evidence="1">
    <location>
        <position position="303"/>
    </location>
</feature>
<feature type="modified residue" description="Phosphoserine; by MAPK3" evidence="1">
    <location>
        <position position="307"/>
    </location>
</feature>
<feature type="modified residue" description="Phosphoserine" evidence="1">
    <location>
        <position position="314"/>
    </location>
</feature>
<feature type="modified residue" description="Phosphoserine" evidence="1">
    <location>
        <position position="319"/>
    </location>
</feature>
<feature type="modified residue" description="Phosphoserine; by PKA" evidence="1">
    <location>
        <position position="320"/>
    </location>
</feature>
<feature type="modified residue" description="Phosphothreonine" evidence="1">
    <location>
        <position position="324"/>
    </location>
</feature>
<feature type="modified residue" description="Phosphoserine; by MAPK12" evidence="1">
    <location>
        <position position="327"/>
    </location>
</feature>
<feature type="modified residue" description="Phosphoserine" evidence="1">
    <location>
        <position position="346"/>
    </location>
</feature>
<feature type="modified residue" description="Phosphoserine; by MAPK8" evidence="1">
    <location>
        <position position="359"/>
    </location>
</feature>
<feature type="modified residue" description="Phosphoserine; by PLK1" evidence="1">
    <location>
        <position position="415"/>
    </location>
</feature>
<feature type="modified residue" description="Phosphoserine" evidence="1">
    <location>
        <position position="440"/>
    </location>
</feature>
<feature type="modified residue" description="N6-acetyllysine" evidence="1">
    <location>
        <position position="520"/>
    </location>
</feature>
<feature type="cross-link" description="Glycyl lysine isopeptide (Lys-Gly) (interchain with G-Cter in SUMO2); alternate" evidence="1">
    <location>
        <position position="91"/>
    </location>
</feature>
<feature type="cross-link" description="Glycyl lysine isopeptide (Lys-Gly) (interchain with G-Cter in SUMO2)" evidence="1">
    <location>
        <position position="131"/>
    </location>
</feature>
<feature type="cross-link" description="Glycyl lysine isopeptide (Lys-Gly) (interchain with G-Cter in SUMO2); alternate" evidence="1">
    <location>
        <position position="208"/>
    </location>
</feature>
<feature type="cross-link" description="Glycyl lysine isopeptide (Lys-Gly) (interchain with G-Cter in SUMO2)" evidence="1">
    <location>
        <position position="224"/>
    </location>
</feature>
<feature type="cross-link" description="Glycyl lysine isopeptide (Lys-Gly) (interchain with G-Cter in SUMO); alternate" evidence="1">
    <location>
        <position position="298"/>
    </location>
</feature>
<feature type="cross-link" description="Glycyl lysine isopeptide (Lys-Gly) (interchain with G-Cter in SUMO2); alternate" evidence="1">
    <location>
        <position position="298"/>
    </location>
</feature>
<dbReference type="EMBL" id="BC123711">
    <property type="protein sequence ID" value="AAI23712.1"/>
    <property type="molecule type" value="mRNA"/>
</dbReference>
<dbReference type="RefSeq" id="NP_001070277.1">
    <property type="nucleotide sequence ID" value="NM_001076809.1"/>
</dbReference>
<dbReference type="BMRB" id="Q08DJ8"/>
<dbReference type="SMR" id="Q08DJ8"/>
<dbReference type="FunCoup" id="Q08DJ8">
    <property type="interactions" value="2837"/>
</dbReference>
<dbReference type="STRING" id="9913.ENSBTAP00000062137"/>
<dbReference type="iPTMnet" id="Q08DJ8"/>
<dbReference type="PaxDb" id="9913-ENSBTAP00000027654"/>
<dbReference type="GeneID" id="506235"/>
<dbReference type="KEGG" id="bta:506235"/>
<dbReference type="CTD" id="3297"/>
<dbReference type="VEuPathDB" id="HostDB:ENSBTAG00000020751"/>
<dbReference type="eggNOG" id="KOG0627">
    <property type="taxonomic scope" value="Eukaryota"/>
</dbReference>
<dbReference type="HOGENOM" id="CLU_038829_2_0_1"/>
<dbReference type="InParanoid" id="Q08DJ8"/>
<dbReference type="OrthoDB" id="60033at2759"/>
<dbReference type="TreeFam" id="TF330401"/>
<dbReference type="Reactome" id="R-BTA-3371453">
    <property type="pathway name" value="Regulation of HSF1-mediated heat shock response"/>
</dbReference>
<dbReference type="Reactome" id="R-BTA-3371511">
    <property type="pathway name" value="HSF1 activation"/>
</dbReference>
<dbReference type="Reactome" id="R-BTA-3371568">
    <property type="pathway name" value="Attenuation phase"/>
</dbReference>
<dbReference type="Reactome" id="R-BTA-3371571">
    <property type="pathway name" value="HSF1-dependent transactivation"/>
</dbReference>
<dbReference type="Reactome" id="R-BTA-9841251">
    <property type="pathway name" value="Mitochondrial unfolded protein response (UPRmt)"/>
</dbReference>
<dbReference type="Proteomes" id="UP000009136">
    <property type="component" value="Chromosome 14"/>
</dbReference>
<dbReference type="Bgee" id="ENSBTAG00000020751">
    <property type="expression patterns" value="Expressed in choroid plexus and 103 other cell types or tissues"/>
</dbReference>
<dbReference type="GO" id="GO:0005813">
    <property type="term" value="C:centrosome"/>
    <property type="evidence" value="ECO:0000250"/>
    <property type="project" value="UniProtKB"/>
</dbReference>
<dbReference type="GO" id="GO:0005737">
    <property type="term" value="C:cytoplasm"/>
    <property type="evidence" value="ECO:0000250"/>
    <property type="project" value="UniProtKB"/>
</dbReference>
<dbReference type="GO" id="GO:0000776">
    <property type="term" value="C:kinetochore"/>
    <property type="evidence" value="ECO:0000250"/>
    <property type="project" value="UniProtKB"/>
</dbReference>
<dbReference type="GO" id="GO:0097431">
    <property type="term" value="C:mitotic spindle pole"/>
    <property type="evidence" value="ECO:0000250"/>
    <property type="project" value="UniProtKB"/>
</dbReference>
<dbReference type="GO" id="GO:0097165">
    <property type="term" value="C:nuclear stress granule"/>
    <property type="evidence" value="ECO:0000250"/>
    <property type="project" value="UniProtKB"/>
</dbReference>
<dbReference type="GO" id="GO:0005654">
    <property type="term" value="C:nucleoplasm"/>
    <property type="evidence" value="ECO:0000250"/>
    <property type="project" value="UniProtKB"/>
</dbReference>
<dbReference type="GO" id="GO:0005634">
    <property type="term" value="C:nucleus"/>
    <property type="evidence" value="ECO:0000250"/>
    <property type="project" value="UniProtKB"/>
</dbReference>
<dbReference type="GO" id="GO:0048471">
    <property type="term" value="C:perinuclear region of cytoplasm"/>
    <property type="evidence" value="ECO:0000250"/>
    <property type="project" value="UniProtKB"/>
</dbReference>
<dbReference type="GO" id="GO:0016605">
    <property type="term" value="C:PML body"/>
    <property type="evidence" value="ECO:0000250"/>
    <property type="project" value="UniProtKB"/>
</dbReference>
<dbReference type="GO" id="GO:0101031">
    <property type="term" value="C:protein folding chaperone complex"/>
    <property type="evidence" value="ECO:0000250"/>
    <property type="project" value="UniProtKB"/>
</dbReference>
<dbReference type="GO" id="GO:1990904">
    <property type="term" value="C:ribonucleoprotein complex"/>
    <property type="evidence" value="ECO:0000250"/>
    <property type="project" value="UniProtKB"/>
</dbReference>
<dbReference type="GO" id="GO:0031490">
    <property type="term" value="F:chromatin DNA binding"/>
    <property type="evidence" value="ECO:0000250"/>
    <property type="project" value="UniProtKB"/>
</dbReference>
<dbReference type="GO" id="GO:0003677">
    <property type="term" value="F:DNA binding"/>
    <property type="evidence" value="ECO:0000250"/>
    <property type="project" value="UniProtKB"/>
</dbReference>
<dbReference type="GO" id="GO:0001228">
    <property type="term" value="F:DNA-binding transcription activator activity, RNA polymerase II-specific"/>
    <property type="evidence" value="ECO:0000250"/>
    <property type="project" value="UniProtKB"/>
</dbReference>
<dbReference type="GO" id="GO:0031072">
    <property type="term" value="F:heat shock protein binding"/>
    <property type="evidence" value="ECO:0000250"/>
    <property type="project" value="UniProtKB"/>
</dbReference>
<dbReference type="GO" id="GO:0051879">
    <property type="term" value="F:Hsp90 protein binding"/>
    <property type="evidence" value="ECO:0000250"/>
    <property type="project" value="UniProtKB"/>
</dbReference>
<dbReference type="GO" id="GO:0042802">
    <property type="term" value="F:identical protein binding"/>
    <property type="evidence" value="ECO:0000250"/>
    <property type="project" value="UniProtKB"/>
</dbReference>
<dbReference type="GO" id="GO:0046982">
    <property type="term" value="F:protein heterodimerization activity"/>
    <property type="evidence" value="ECO:0000250"/>
    <property type="project" value="UniProtKB"/>
</dbReference>
<dbReference type="GO" id="GO:0043565">
    <property type="term" value="F:sequence-specific DNA binding"/>
    <property type="evidence" value="ECO:0000250"/>
    <property type="project" value="UniProtKB"/>
</dbReference>
<dbReference type="GO" id="GO:0061770">
    <property type="term" value="F:translation elongation factor binding"/>
    <property type="evidence" value="ECO:0000250"/>
    <property type="project" value="UniProtKB"/>
</dbReference>
<dbReference type="GO" id="GO:0071276">
    <property type="term" value="P:cellular response to cadmium ion"/>
    <property type="evidence" value="ECO:0000250"/>
    <property type="project" value="UniProtKB"/>
</dbReference>
<dbReference type="GO" id="GO:0071280">
    <property type="term" value="P:cellular response to copper ion"/>
    <property type="evidence" value="ECO:0000250"/>
    <property type="project" value="UniProtKB"/>
</dbReference>
<dbReference type="GO" id="GO:0072738">
    <property type="term" value="P:cellular response to diamide"/>
    <property type="evidence" value="ECO:0000250"/>
    <property type="project" value="UniProtKB"/>
</dbReference>
<dbReference type="GO" id="GO:0071480">
    <property type="term" value="P:cellular response to gamma radiation"/>
    <property type="evidence" value="ECO:0000250"/>
    <property type="project" value="UniProtKB"/>
</dbReference>
<dbReference type="GO" id="GO:0034605">
    <property type="term" value="P:cellular response to heat"/>
    <property type="evidence" value="ECO:0000250"/>
    <property type="project" value="UniProtKB"/>
</dbReference>
<dbReference type="GO" id="GO:1903936">
    <property type="term" value="P:cellular response to sodium arsenite"/>
    <property type="evidence" value="ECO:0000250"/>
    <property type="project" value="UniProtKB"/>
</dbReference>
<dbReference type="GO" id="GO:0034620">
    <property type="term" value="P:cellular response to unfolded protein"/>
    <property type="evidence" value="ECO:0000250"/>
    <property type="project" value="UniProtKB"/>
</dbReference>
<dbReference type="GO" id="GO:0006281">
    <property type="term" value="P:DNA repair"/>
    <property type="evidence" value="ECO:0007669"/>
    <property type="project" value="UniProtKB-KW"/>
</dbReference>
<dbReference type="GO" id="GO:0000165">
    <property type="term" value="P:MAPK cascade"/>
    <property type="evidence" value="ECO:0000250"/>
    <property type="project" value="UniProtKB"/>
</dbReference>
<dbReference type="GO" id="GO:0006397">
    <property type="term" value="P:mRNA processing"/>
    <property type="evidence" value="ECO:0007669"/>
    <property type="project" value="UniProtKB-KW"/>
</dbReference>
<dbReference type="GO" id="GO:0051028">
    <property type="term" value="P:mRNA transport"/>
    <property type="evidence" value="ECO:0007669"/>
    <property type="project" value="UniProtKB-KW"/>
</dbReference>
<dbReference type="GO" id="GO:2001033">
    <property type="term" value="P:negative regulation of double-strand break repair via nonhomologous end joining"/>
    <property type="evidence" value="ECO:0000250"/>
    <property type="project" value="UniProtKB"/>
</dbReference>
<dbReference type="GO" id="GO:0031333">
    <property type="term" value="P:negative regulation of protein-containing complex assembly"/>
    <property type="evidence" value="ECO:0000250"/>
    <property type="project" value="UniProtKB"/>
</dbReference>
<dbReference type="GO" id="GO:0000122">
    <property type="term" value="P:negative regulation of transcription by RNA polymerase II"/>
    <property type="evidence" value="ECO:0000250"/>
    <property type="project" value="UniProtKB"/>
</dbReference>
<dbReference type="GO" id="GO:0045931">
    <property type="term" value="P:positive regulation of mitotic cell cycle"/>
    <property type="evidence" value="ECO:0000250"/>
    <property type="project" value="UniProtKB"/>
</dbReference>
<dbReference type="GO" id="GO:0045944">
    <property type="term" value="P:positive regulation of transcription by RNA polymerase II"/>
    <property type="evidence" value="ECO:0000250"/>
    <property type="project" value="UniProtKB"/>
</dbReference>
<dbReference type="GO" id="GO:0065003">
    <property type="term" value="P:protein-containing complex assembly"/>
    <property type="evidence" value="ECO:0000250"/>
    <property type="project" value="UniProtKB"/>
</dbReference>
<dbReference type="GO" id="GO:1900034">
    <property type="term" value="P:regulation of cellular response to heat"/>
    <property type="evidence" value="ECO:0000250"/>
    <property type="project" value="UniProtKB"/>
</dbReference>
<dbReference type="FunFam" id="1.10.10.10:FF:000027">
    <property type="entry name" value="Heat shock transcription factor 1"/>
    <property type="match status" value="1"/>
</dbReference>
<dbReference type="Gene3D" id="1.10.10.10">
    <property type="entry name" value="Winged helix-like DNA-binding domain superfamily/Winged helix DNA-binding domain"/>
    <property type="match status" value="1"/>
</dbReference>
<dbReference type="InterPro" id="IPR000232">
    <property type="entry name" value="HSF_DNA-bd"/>
</dbReference>
<dbReference type="InterPro" id="IPR010542">
    <property type="entry name" value="Vert_HSTF_C"/>
</dbReference>
<dbReference type="InterPro" id="IPR036388">
    <property type="entry name" value="WH-like_DNA-bd_sf"/>
</dbReference>
<dbReference type="InterPro" id="IPR036390">
    <property type="entry name" value="WH_DNA-bd_sf"/>
</dbReference>
<dbReference type="PANTHER" id="PTHR10015:SF274">
    <property type="entry name" value="HEAT SHOCK FACTOR PROTEIN 1"/>
    <property type="match status" value="1"/>
</dbReference>
<dbReference type="PANTHER" id="PTHR10015">
    <property type="entry name" value="HEAT SHOCK TRANSCRIPTION FACTOR"/>
    <property type="match status" value="1"/>
</dbReference>
<dbReference type="Pfam" id="PF00447">
    <property type="entry name" value="HSF_DNA-bind"/>
    <property type="match status" value="1"/>
</dbReference>
<dbReference type="Pfam" id="PF06546">
    <property type="entry name" value="Vert_HS_TF"/>
    <property type="match status" value="1"/>
</dbReference>
<dbReference type="PRINTS" id="PR00056">
    <property type="entry name" value="HSFDOMAIN"/>
</dbReference>
<dbReference type="SMART" id="SM00415">
    <property type="entry name" value="HSF"/>
    <property type="match status" value="1"/>
</dbReference>
<dbReference type="SUPFAM" id="SSF46785">
    <property type="entry name" value="Winged helix' DNA-binding domain"/>
    <property type="match status" value="1"/>
</dbReference>
<dbReference type="PROSITE" id="PS00434">
    <property type="entry name" value="HSF_DOMAIN"/>
    <property type="match status" value="1"/>
</dbReference>
<reference key="1">
    <citation type="submission" date="2006-09" db="EMBL/GenBank/DDBJ databases">
        <authorList>
            <consortium name="NIH - Mammalian Gene Collection (MGC) project"/>
        </authorList>
    </citation>
    <scope>NUCLEOTIDE SEQUENCE [LARGE SCALE MRNA]</scope>
    <source>
        <strain>Hereford</strain>
        <tissue>Brain cortex</tissue>
    </source>
</reference>
<evidence type="ECO:0000250" key="1">
    <source>
        <dbReference type="UniProtKB" id="Q00613"/>
    </source>
</evidence>
<evidence type="ECO:0000256" key="2">
    <source>
        <dbReference type="SAM" id="MobiDB-lite"/>
    </source>
</evidence>
<evidence type="ECO:0000305" key="3"/>
<keyword id="KW-0007">Acetylation</keyword>
<keyword id="KW-0010">Activator</keyword>
<keyword id="KW-0137">Centromere</keyword>
<keyword id="KW-0158">Chromosome</keyword>
<keyword id="KW-0963">Cytoplasm</keyword>
<keyword id="KW-0206">Cytoskeleton</keyword>
<keyword id="KW-0227">DNA damage</keyword>
<keyword id="KW-0234">DNA repair</keyword>
<keyword id="KW-0238">DNA-binding</keyword>
<keyword id="KW-1017">Isopeptide bond</keyword>
<keyword id="KW-0995">Kinetochore</keyword>
<keyword id="KW-0507">mRNA processing</keyword>
<keyword id="KW-0509">mRNA transport</keyword>
<keyword id="KW-0539">Nucleus</keyword>
<keyword id="KW-0597">Phosphoprotein</keyword>
<keyword id="KW-1185">Reference proteome</keyword>
<keyword id="KW-0346">Stress response</keyword>
<keyword id="KW-0804">Transcription</keyword>
<keyword id="KW-0805">Transcription regulation</keyword>
<keyword id="KW-0813">Transport</keyword>
<keyword id="KW-0832">Ubl conjugation</keyword>